<reference key="1">
    <citation type="journal article" date="2017" name="Genome Biol.">
        <title>Comparative genomics reveals high biological diversity and specific adaptations in the industrially and medically important fungal genus Aspergillus.</title>
        <authorList>
            <person name="de Vries R.P."/>
            <person name="Riley R."/>
            <person name="Wiebenga A."/>
            <person name="Aguilar-Osorio G."/>
            <person name="Amillis S."/>
            <person name="Uchima C.A."/>
            <person name="Anderluh G."/>
            <person name="Asadollahi M."/>
            <person name="Askin M."/>
            <person name="Barry K."/>
            <person name="Battaglia E."/>
            <person name="Bayram O."/>
            <person name="Benocci T."/>
            <person name="Braus-Stromeyer S.A."/>
            <person name="Caldana C."/>
            <person name="Canovas D."/>
            <person name="Cerqueira G.C."/>
            <person name="Chen F."/>
            <person name="Chen W."/>
            <person name="Choi C."/>
            <person name="Clum A."/>
            <person name="Dos Santos R.A."/>
            <person name="Damasio A.R."/>
            <person name="Diallinas G."/>
            <person name="Emri T."/>
            <person name="Fekete E."/>
            <person name="Flipphi M."/>
            <person name="Freyberg S."/>
            <person name="Gallo A."/>
            <person name="Gournas C."/>
            <person name="Habgood R."/>
            <person name="Hainaut M."/>
            <person name="Harispe M.L."/>
            <person name="Henrissat B."/>
            <person name="Hilden K.S."/>
            <person name="Hope R."/>
            <person name="Hossain A."/>
            <person name="Karabika E."/>
            <person name="Karaffa L."/>
            <person name="Karanyi Z."/>
            <person name="Krasevec N."/>
            <person name="Kuo A."/>
            <person name="Kusch H."/>
            <person name="LaButti K."/>
            <person name="Lagendijk E.L."/>
            <person name="Lapidus A."/>
            <person name="Levasseur A."/>
            <person name="Lindquist E."/>
            <person name="Lipzen A."/>
            <person name="Logrieco A.F."/>
            <person name="MacCabe A."/>
            <person name="Maekelae M.R."/>
            <person name="Malavazi I."/>
            <person name="Melin P."/>
            <person name="Meyer V."/>
            <person name="Mielnichuk N."/>
            <person name="Miskei M."/>
            <person name="Molnar A.P."/>
            <person name="Mule G."/>
            <person name="Ngan C.Y."/>
            <person name="Orejas M."/>
            <person name="Orosz E."/>
            <person name="Ouedraogo J.P."/>
            <person name="Overkamp K.M."/>
            <person name="Park H.-S."/>
            <person name="Perrone G."/>
            <person name="Piumi F."/>
            <person name="Punt P.J."/>
            <person name="Ram A.F."/>
            <person name="Ramon A."/>
            <person name="Rauscher S."/>
            <person name="Record E."/>
            <person name="Riano-Pachon D.M."/>
            <person name="Robert V."/>
            <person name="Roehrig J."/>
            <person name="Ruller R."/>
            <person name="Salamov A."/>
            <person name="Salih N.S."/>
            <person name="Samson R.A."/>
            <person name="Sandor E."/>
            <person name="Sanguinetti M."/>
            <person name="Schuetze T."/>
            <person name="Sepcic K."/>
            <person name="Shelest E."/>
            <person name="Sherlock G."/>
            <person name="Sophianopoulou V."/>
            <person name="Squina F.M."/>
            <person name="Sun H."/>
            <person name="Susca A."/>
            <person name="Todd R.B."/>
            <person name="Tsang A."/>
            <person name="Unkles S.E."/>
            <person name="van de Wiele N."/>
            <person name="van Rossen-Uffink D."/>
            <person name="Oliveira J.V."/>
            <person name="Vesth T.C."/>
            <person name="Visser J."/>
            <person name="Yu J.-H."/>
            <person name="Zhou M."/>
            <person name="Andersen M.R."/>
            <person name="Archer D.B."/>
            <person name="Baker S.E."/>
            <person name="Benoit I."/>
            <person name="Brakhage A.A."/>
            <person name="Braus G.H."/>
            <person name="Fischer R."/>
            <person name="Frisvad J.C."/>
            <person name="Goldman G.H."/>
            <person name="Houbraken J."/>
            <person name="Oakley B."/>
            <person name="Pocsi I."/>
            <person name="Scazzocchio C."/>
            <person name="Seiboth B."/>
            <person name="vanKuyk P.A."/>
            <person name="Wortman J."/>
            <person name="Dyer P.S."/>
            <person name="Grigoriev I.V."/>
        </authorList>
    </citation>
    <scope>NUCLEOTIDE SEQUENCE [LARGE SCALE GENOMIC DNA]</scope>
    <source>
        <strain>ATCC 16872 / CBS 172.66 / WB 5094</strain>
    </source>
</reference>
<reference key="2">
    <citation type="journal article" date="2017" name="Neoplasma">
        <title>Secalonic acid- F inhibited cell growth more effectively than 5-fluorouracil on hepatocellular carcinoma in vitro and in vivo.</title>
        <authorList>
            <person name="Gao X."/>
            <person name="Sun H.L."/>
            <person name="Liu D.S."/>
            <person name="Zhang J.R."/>
            <person name="Zhang J."/>
            <person name="Yan M.M."/>
            <person name="Pan X.H."/>
        </authorList>
    </citation>
    <scope>BIOTECHNOLOGY</scope>
</reference>
<reference key="3">
    <citation type="journal article" date="2018" name="Curr. Microbiol.">
        <title>Secondary Metabolites and Their Biological Activity from Aspergillus aculeatus KKU-CT2.</title>
        <authorList>
            <person name="Yodsing N."/>
            <person name="Lekphrom R."/>
            <person name="Sangsopha W."/>
            <person name="Aimi T."/>
            <person name="Boonlue S."/>
        </authorList>
    </citation>
    <scope>BIOTECHNOLOGY</scope>
</reference>
<reference key="4">
    <citation type="journal article" date="2019" name="Chem. Sci.">
        <title>Structure revision of cryptosporioptides and determination of the genetic basis for dimeric xanthone biosynthesis in fungi.</title>
        <authorList>
            <person name="Greco C."/>
            <person name="de Mattos-Shipley K."/>
            <person name="Bailey A.M."/>
            <person name="Mulholland N.P."/>
            <person name="Vincent J.L."/>
            <person name="Willis C.L."/>
            <person name="Cox R.J."/>
            <person name="Simpson T.J."/>
        </authorList>
    </citation>
    <scope>IDENTIFICATION</scope>
    <scope>FUNCTION</scope>
</reference>
<reference key="5">
    <citation type="journal article" date="2019" name="Molecules">
        <title>Secalonic Acid-F, a Novel Mycotoxin, Represses the Progression of Hepatocellular Carcinoma via MARCH1 Regulation of the PI3K/AKT/beta-catenin Signaling Pathway.</title>
        <authorList>
            <person name="Xie L."/>
            <person name="Li M."/>
            <person name="Liu D."/>
            <person name="Wang X."/>
            <person name="Wang P."/>
            <person name="Dai H."/>
            <person name="Yang W."/>
            <person name="Liu W."/>
            <person name="Hu X."/>
            <person name="Zhao M."/>
        </authorList>
    </citation>
    <scope>BIOTECHNOLOGY</scope>
</reference>
<reference key="6">
    <citation type="journal article" date="2020" name="ACS Omega">
        <title>Discovery of a Secalonic Acid Derivative from Aspergillus aculeatus, an Endophyte of Rosa damascena Mill., Triggers Apoptosis in MDA-MB-231 Triple Negative Breast Cancer Cells.</title>
        <authorList>
            <person name="Farooq S."/>
            <person name="Qayum A."/>
            <person name="Nalli Y."/>
            <person name="Lauro G."/>
            <person name="Chini M.G."/>
            <person name="Bifulco G."/>
            <person name="Chaubey A."/>
            <person name="Singh S.K."/>
            <person name="Riyaz-Ul-Hassan S."/>
            <person name="Ali A."/>
        </authorList>
    </citation>
    <scope>BIOTECHNOLOGY</scope>
</reference>
<reference key="7">
    <citation type="journal article" date="2021" name="J. Nat. Prod.">
        <title>Heterologous biosynthesis of tetrahydroxanthone dimers: determination of key factors for selective or divergent synthesis.</title>
        <authorList>
            <person name="Wei X."/>
            <person name="Chen X."/>
            <person name="Chen L."/>
            <person name="Yan D."/>
            <person name="Wang W.G."/>
            <person name="Matsuda Y."/>
        </authorList>
    </citation>
    <scope>FUNCTION</scope>
    <scope>PATHWAY</scope>
</reference>
<proteinExistence type="evidence at protein level"/>
<feature type="chain" id="PRO_0000453431" description="Atrochrysone carboxyl ACP thioesterase AacuM">
    <location>
        <begin position="1"/>
        <end position="312"/>
    </location>
</feature>
<feature type="active site" description="Proton donor/acceptor" evidence="3">
    <location>
        <position position="107"/>
    </location>
</feature>
<feature type="binding site" evidence="2">
    <location>
        <position position="103"/>
    </location>
    <ligand>
        <name>Zn(2+)</name>
        <dbReference type="ChEBI" id="CHEBI:29105"/>
        <label>1</label>
        <note>catalytic</note>
    </ligand>
</feature>
<feature type="binding site" evidence="2">
    <location>
        <position position="105"/>
    </location>
    <ligand>
        <name>Zn(2+)</name>
        <dbReference type="ChEBI" id="CHEBI:29105"/>
        <label>1</label>
        <note>catalytic</note>
    </ligand>
</feature>
<feature type="binding site" evidence="2">
    <location>
        <position position="107"/>
    </location>
    <ligand>
        <name>Zn(2+)</name>
        <dbReference type="ChEBI" id="CHEBI:29105"/>
        <label>2</label>
        <note>catalytic</note>
    </ligand>
</feature>
<feature type="binding site" evidence="2">
    <location>
        <position position="108"/>
    </location>
    <ligand>
        <name>Zn(2+)</name>
        <dbReference type="ChEBI" id="CHEBI:29105"/>
        <label>2</label>
        <note>catalytic</note>
    </ligand>
</feature>
<evidence type="ECO:0000250" key="1">
    <source>
        <dbReference type="UniProtKB" id="Q5BH31"/>
    </source>
</evidence>
<evidence type="ECO:0000250" key="2">
    <source>
        <dbReference type="UniProtKB" id="Q988B9"/>
    </source>
</evidence>
<evidence type="ECO:0000255" key="3"/>
<evidence type="ECO:0000269" key="4">
    <source>
    </source>
</evidence>
<evidence type="ECO:0000269" key="5">
    <source>
    </source>
</evidence>
<evidence type="ECO:0000269" key="6">
    <source>
    </source>
</evidence>
<evidence type="ECO:0000269" key="7">
    <source>
    </source>
</evidence>
<evidence type="ECO:0000269" key="8">
    <source>
    </source>
</evidence>
<evidence type="ECO:0000269" key="9">
    <source>
    </source>
</evidence>
<evidence type="ECO:0000303" key="10">
    <source>
    </source>
</evidence>
<evidence type="ECO:0000305" key="11"/>
<evidence type="ECO:0000305" key="12">
    <source>
    </source>
</evidence>
<evidence type="ECO:0000305" key="13">
    <source>
    </source>
</evidence>
<sequence length="312" mass="34766">MGEGGYRQINKTLNVCAFDDYLVTQQSRLPKLLDIEQLSPRVLRVLGQNAGKFTLQGTNTYIVGTGQHRLIIDTAQGYREWADLIDVTLSNRSISLSHVFLTHWHGDHTGGVPDLIRMYPHLADGIYKNSPEQGQHPIEEGQIFKVEGATIRAVHGPGHSHDHMCFVLEEENAMFTGDNVLGHGTSAVEQLGLYMDTLRKLQAQGCRTGYPAHGAVIPDLNLKIATELAQKTRREKQCLAALGRIRKERPTGQLASVTVGELIDVVHGTRVNEEVRKMALEPFMEEVLRKLAEDGKVAFRVRKGVKTWFALT</sequence>
<keyword id="KW-0378">Hydrolase</keyword>
<keyword id="KW-0479">Metal-binding</keyword>
<keyword id="KW-1185">Reference proteome</keyword>
<keyword id="KW-0862">Zinc</keyword>
<protein>
    <recommendedName>
        <fullName evidence="1">Atrochrysone carboxyl ACP thioesterase AacuM</fullName>
        <shortName evidence="1">ACTE AacuM</shortName>
        <ecNumber evidence="1">3.1.2.-</ecNumber>
    </recommendedName>
    <alternativeName>
        <fullName evidence="10">Secalonic acid biosynthesis cluster protein M</fullName>
    </alternativeName>
</protein>
<gene>
    <name evidence="10" type="primary">AacuM</name>
    <name type="ORF">ASPACDRAFT_33688</name>
</gene>
<name>AACUM_ASPA1</name>
<organism>
    <name type="scientific">Aspergillus aculeatus (strain ATCC 16872 / CBS 172.66 / WB 5094)</name>
    <dbReference type="NCBI Taxonomy" id="690307"/>
    <lineage>
        <taxon>Eukaryota</taxon>
        <taxon>Fungi</taxon>
        <taxon>Dikarya</taxon>
        <taxon>Ascomycota</taxon>
        <taxon>Pezizomycotina</taxon>
        <taxon>Eurotiomycetes</taxon>
        <taxon>Eurotiomycetidae</taxon>
        <taxon>Eurotiales</taxon>
        <taxon>Aspergillaceae</taxon>
        <taxon>Aspergillus</taxon>
        <taxon>Aspergillus subgen. Circumdati</taxon>
    </lineage>
</organism>
<accession>A0A1L9WLF1</accession>
<dbReference type="EC" id="3.1.2.-" evidence="1"/>
<dbReference type="EMBL" id="KV878984">
    <property type="protein sequence ID" value="OJJ96971.1"/>
    <property type="molecule type" value="Genomic_DNA"/>
</dbReference>
<dbReference type="RefSeq" id="XP_020053311.1">
    <property type="nucleotide sequence ID" value="XM_020199981.1"/>
</dbReference>
<dbReference type="SMR" id="A0A1L9WLF1"/>
<dbReference type="STRING" id="690307.A0A1L9WLF1"/>
<dbReference type="GeneID" id="30973795"/>
<dbReference type="VEuPathDB" id="FungiDB:ASPACDRAFT_33688"/>
<dbReference type="OMA" id="NICAFEE"/>
<dbReference type="OrthoDB" id="17458at2759"/>
<dbReference type="Proteomes" id="UP000184546">
    <property type="component" value="Unassembled WGS sequence"/>
</dbReference>
<dbReference type="GO" id="GO:0016787">
    <property type="term" value="F:hydrolase activity"/>
    <property type="evidence" value="ECO:0007669"/>
    <property type="project" value="UniProtKB-KW"/>
</dbReference>
<dbReference type="GO" id="GO:0046872">
    <property type="term" value="F:metal ion binding"/>
    <property type="evidence" value="ECO:0007669"/>
    <property type="project" value="UniProtKB-KW"/>
</dbReference>
<dbReference type="GO" id="GO:0044550">
    <property type="term" value="P:secondary metabolite biosynthetic process"/>
    <property type="evidence" value="ECO:0007669"/>
    <property type="project" value="TreeGrafter"/>
</dbReference>
<dbReference type="CDD" id="cd07722">
    <property type="entry name" value="LACTB2-like_MBL-fold"/>
    <property type="match status" value="1"/>
</dbReference>
<dbReference type="FunFam" id="3.60.15.10:FF:000041">
    <property type="entry name" value="Metallo-beta-lactamase domain protein"/>
    <property type="match status" value="1"/>
</dbReference>
<dbReference type="Gene3D" id="3.60.15.10">
    <property type="entry name" value="Ribonuclease Z/Hydroxyacylglutathione hydrolase-like"/>
    <property type="match status" value="1"/>
</dbReference>
<dbReference type="Gene3D" id="1.10.10.10">
    <property type="entry name" value="Winged helix-like DNA-binding domain superfamily/Winged helix DNA-binding domain"/>
    <property type="match status" value="1"/>
</dbReference>
<dbReference type="InterPro" id="IPR047921">
    <property type="entry name" value="LACTB2-like_MBL-fold"/>
</dbReference>
<dbReference type="InterPro" id="IPR001279">
    <property type="entry name" value="Metallo-B-lactamas"/>
</dbReference>
<dbReference type="InterPro" id="IPR036866">
    <property type="entry name" value="RibonucZ/Hydroxyglut_hydro"/>
</dbReference>
<dbReference type="InterPro" id="IPR050662">
    <property type="entry name" value="Sec-metab_biosynth-thioest"/>
</dbReference>
<dbReference type="InterPro" id="IPR036388">
    <property type="entry name" value="WH-like_DNA-bd_sf"/>
</dbReference>
<dbReference type="PANTHER" id="PTHR23131:SF3">
    <property type="entry name" value="ATROCHRYSONE CARBOXYL ACP THIOESTERASE"/>
    <property type="match status" value="1"/>
</dbReference>
<dbReference type="PANTHER" id="PTHR23131">
    <property type="entry name" value="ENDORIBONUCLEASE LACTB2"/>
    <property type="match status" value="1"/>
</dbReference>
<dbReference type="Pfam" id="PF00753">
    <property type="entry name" value="Lactamase_B"/>
    <property type="match status" value="1"/>
</dbReference>
<dbReference type="SMART" id="SM00849">
    <property type="entry name" value="Lactamase_B"/>
    <property type="match status" value="1"/>
</dbReference>
<dbReference type="SUPFAM" id="SSF56281">
    <property type="entry name" value="Metallo-hydrolase/oxidoreductase"/>
    <property type="match status" value="1"/>
</dbReference>
<comment type="function">
    <text evidence="7 9 13">Atrochrysone carboxyl ACP thioesterase; part of the gene cluster that mediates the biosynthesis of the tetrahydroxanthone dimer secalonic acid D (PubMed:30996871, PubMed:33891392). The pathway begins with the synthesis of atrochrysone thioester by the polyketide synthase AacuL (Probable). The atrochrysone carboxyl ACP thioesterase AacuM then breaks the thioester bond and releases the atrochrysone carboxylic acid from AacuL (Probable). Atrochrysone carboxylic acid is decarboxylated by the decarboxylase AacuI, and oxidized by the anthrone oxygenase AacuG to yield emodin (Probable). Emodin is then reduced to emodin hydroquinone by a yet unidentified oxidoreductase (Probable). A-ring reduction by the short chain dehydrogenase AacuN, dehydration by the scytalone dehydratase-like protein AacuK and probable spontaneous re-oxidation, results in overall deoxygenation to chrysophanol (PubMed:33891392). Baeyer-Villiger oxidation by the Baeyer-Villiger monooxygenase (BVMO) AacuH then yields monodictyphenone (PubMed:33891392). Monodictyphenone is transformed into compounds with the tetrahydroxanthone skeleton via methylesterification by the methyltransferase AacuQ, followed by the action of the flavin-dependent monooxygenase AacuC, the isomerase AacuP, and the short chain dehydrogenase/reductase AacuF or AacuD (PubMed:33891392). AacuF and AacuD should accept the same compound as a substrate but perform the ketoreduction with a different stereoselectivity, thus yielding blennolides B and A, respectively (PubMed:33891392). In the final step of the biosynthesis, the cytochrome P450 monooxygenase AacuE accepts blennolide B and/or blennolide A to conduct the dimerization reaction to furnish the tetrahydroxanthone dimers, secalonic acids D, B, and F (PubMed:33891392).</text>
</comment>
<comment type="catalytic activity">
    <reaction evidence="1">
        <text>atrochrysone carboxyl-[ACP] + H2O = atrochrysone carboxylate + holo-[ACP] + H(+)</text>
        <dbReference type="Rhea" id="RHEA:64236"/>
        <dbReference type="Rhea" id="RHEA-COMP:9685"/>
        <dbReference type="Rhea" id="RHEA-COMP:16552"/>
        <dbReference type="ChEBI" id="CHEBI:15377"/>
        <dbReference type="ChEBI" id="CHEBI:15378"/>
        <dbReference type="ChEBI" id="CHEBI:64479"/>
        <dbReference type="ChEBI" id="CHEBI:149712"/>
        <dbReference type="ChEBI" id="CHEBI:149713"/>
    </reaction>
    <physiologicalReaction direction="left-to-right" evidence="1">
        <dbReference type="Rhea" id="RHEA:64237"/>
    </physiologicalReaction>
</comment>
<comment type="cofactor">
    <cofactor evidence="2">
        <name>Zn(2+)</name>
        <dbReference type="ChEBI" id="CHEBI:29105"/>
    </cofactor>
    <text evidence="2">Binds 2 Zn(2+) ions per subunit.</text>
</comment>
<comment type="pathway">
    <text evidence="12">Secondary metabolite biosynthesis.</text>
</comment>
<comment type="biotechnology">
    <text evidence="4 5 6 8">Secalonic acids show unprecedented anticancer activities against various human cancer cells and might be interesting for further derivatization, targeting diseases such as cancer.</text>
</comment>
<comment type="similarity">
    <text evidence="11">Belongs to the metallo-beta-lactamase superfamily.</text>
</comment>